<proteinExistence type="inferred from homology"/>
<name>MRAY_BORBU</name>
<protein>
    <recommendedName>
        <fullName evidence="1">Phospho-N-acetylmuramoyl-pentapeptide-transferase</fullName>
        <ecNumber evidence="1">2.7.8.13</ecNumber>
    </recommendedName>
    <alternativeName>
        <fullName evidence="1">UDP-MurNAc-pentapeptide phosphotransferase</fullName>
    </alternativeName>
</protein>
<evidence type="ECO:0000255" key="1">
    <source>
        <dbReference type="HAMAP-Rule" id="MF_00038"/>
    </source>
</evidence>
<evidence type="ECO:0000305" key="2"/>
<reference key="1">
    <citation type="submission" date="1995-12" db="EMBL/GenBank/DDBJ databases">
        <authorList>
            <person name="Dunn J.J."/>
            <person name="Butler-Loffredo L."/>
            <person name="Kieleczawa J."/>
            <person name="Medalle J."/>
            <person name="Luft B.J."/>
        </authorList>
    </citation>
    <scope>NUCLEOTIDE SEQUENCE [GENOMIC DNA]</scope>
    <source>
        <strain>ATCC 35210 / DSM 4680 / CIP 102532 / B31</strain>
    </source>
</reference>
<reference key="2">
    <citation type="journal article" date="1997" name="Nature">
        <title>Genomic sequence of a Lyme disease spirochaete, Borrelia burgdorferi.</title>
        <authorList>
            <person name="Fraser C.M."/>
            <person name="Casjens S."/>
            <person name="Huang W.M."/>
            <person name="Sutton G.G."/>
            <person name="Clayton R.A."/>
            <person name="Lathigra R."/>
            <person name="White O."/>
            <person name="Ketchum K.A."/>
            <person name="Dodson R.J."/>
            <person name="Hickey E.K."/>
            <person name="Gwinn M.L."/>
            <person name="Dougherty B.A."/>
            <person name="Tomb J.-F."/>
            <person name="Fleischmann R.D."/>
            <person name="Richardson D.L."/>
            <person name="Peterson J.D."/>
            <person name="Kerlavage A.R."/>
            <person name="Quackenbush J."/>
            <person name="Salzberg S.L."/>
            <person name="Hanson M."/>
            <person name="van Vugt R."/>
            <person name="Palmer N."/>
            <person name="Adams M.D."/>
            <person name="Gocayne J.D."/>
            <person name="Weidman J.F."/>
            <person name="Utterback T.R."/>
            <person name="Watthey L."/>
            <person name="McDonald L.A."/>
            <person name="Artiach P."/>
            <person name="Bowman C."/>
            <person name="Garland S.A."/>
            <person name="Fujii C."/>
            <person name="Cotton M.D."/>
            <person name="Horst K."/>
            <person name="Roberts K.M."/>
            <person name="Hatch B."/>
            <person name="Smith H.O."/>
            <person name="Venter J.C."/>
        </authorList>
    </citation>
    <scope>NUCLEOTIDE SEQUENCE [LARGE SCALE GENOMIC DNA]</scope>
    <source>
        <strain>ATCC 35210 / DSM 4680 / CIP 102532 / B31</strain>
    </source>
</reference>
<reference key="3">
    <citation type="submission" date="1996-03" db="EMBL/GenBank/DDBJ databases">
        <title>Mapping and sequencing of a locus involved in the cell division of Borrelia burgdorferi.</title>
        <authorList>
            <person name="Ge Y."/>
            <person name="Old I.G."/>
            <person name="Saint-Girons I."/>
            <person name="Charon N.W."/>
        </authorList>
    </citation>
    <scope>NUCLEOTIDE SEQUENCE [GENOMIC DNA] OF 49-351</scope>
    <source>
        <strain>212</strain>
    </source>
</reference>
<sequence>MFYLLGLRLLKYITFRMAYATIFAFLLSLIVGPYIILKLKKLRADQILREDGPKRHLSEKAGIPTMGGILIFFCVFISLVFWSNILNVYFLIMVFVMLGFAFLGFIDDFLKIKKKTSDGLKARFKIYGQIIFSFFSVGILYYFGGEHVSVIYFPFIKSFQIDLGLFYIPFGMFILISASNSFNLTDGLDGLAIGLSIVITGALIIIAYLTSRADFAAYLHIPNIKGSEELVIFLGALLGGSFGFLWFNAYPAKIMMGDTGSLALGAILGMAALILKSEILFSILAGVFIIETMSVIIQVLVYKKTKKRVFKMAPLHHHFEELGWSEMQVVIRFWIIGLIFAIIALSTIKIR</sequence>
<accession>Q44776</accession>
<accession>Q60120</accession>
<gene>
    <name evidence="1" type="primary">mraY</name>
    <name type="ordered locus">BB_0303</name>
</gene>
<comment type="function">
    <text evidence="1">Catalyzes the initial step of the lipid cycle reactions in the biosynthesis of the cell wall peptidoglycan: transfers peptidoglycan precursor phospho-MurNAc-pentapeptide from UDP-MurNAc-pentapeptide onto the lipid carrier undecaprenyl phosphate, yielding undecaprenyl-pyrophosphoryl-MurNAc-pentapeptide, known as lipid I.</text>
</comment>
<comment type="catalytic activity">
    <reaction evidence="1">
        <text>UDP-N-acetyl-alpha-D-muramoyl-L-alanyl-gamma-D-glutamyl-meso-2,6-diaminopimeloyl-D-alanyl-D-alanine + di-trans,octa-cis-undecaprenyl phosphate = di-trans,octa-cis-undecaprenyl diphospho-N-acetyl-alpha-D-muramoyl-L-alanyl-D-glutamyl-meso-2,6-diaminopimeloyl-D-alanyl-D-alanine + UMP</text>
        <dbReference type="Rhea" id="RHEA:28386"/>
        <dbReference type="ChEBI" id="CHEBI:57865"/>
        <dbReference type="ChEBI" id="CHEBI:60392"/>
        <dbReference type="ChEBI" id="CHEBI:61386"/>
        <dbReference type="ChEBI" id="CHEBI:61387"/>
        <dbReference type="EC" id="2.7.8.13"/>
    </reaction>
</comment>
<comment type="cofactor">
    <cofactor evidence="1">
        <name>Mg(2+)</name>
        <dbReference type="ChEBI" id="CHEBI:18420"/>
    </cofactor>
</comment>
<comment type="pathway">
    <text evidence="1">Cell wall biogenesis; peptidoglycan biosynthesis.</text>
</comment>
<comment type="subcellular location">
    <subcellularLocation>
        <location evidence="1">Cell inner membrane</location>
        <topology evidence="1">Multi-pass membrane protein</topology>
    </subcellularLocation>
</comment>
<comment type="similarity">
    <text evidence="1">Belongs to the glycosyltransferase 4 family. MraY subfamily.</text>
</comment>
<dbReference type="EC" id="2.7.8.13" evidence="1"/>
<dbReference type="EMBL" id="U43739">
    <property type="protein sequence ID" value="AAA85626.1"/>
    <property type="molecule type" value="Genomic_DNA"/>
</dbReference>
<dbReference type="EMBL" id="AE000783">
    <property type="protein sequence ID" value="AAC66645.1"/>
    <property type="molecule type" value="Genomic_DNA"/>
</dbReference>
<dbReference type="EMBL" id="X96685">
    <property type="protein sequence ID" value="CAA65460.1"/>
    <property type="molecule type" value="Genomic_DNA"/>
</dbReference>
<dbReference type="EMBL" id="X96432">
    <property type="protein sequence ID" value="CAA65292.1"/>
    <property type="molecule type" value="Genomic_DNA"/>
</dbReference>
<dbReference type="PIR" id="G70137">
    <property type="entry name" value="G70137"/>
</dbReference>
<dbReference type="RefSeq" id="NP_212437.1">
    <property type="nucleotide sequence ID" value="NC_001318.1"/>
</dbReference>
<dbReference type="RefSeq" id="WP_002556902.1">
    <property type="nucleotide sequence ID" value="NC_001318.1"/>
</dbReference>
<dbReference type="SMR" id="Q44776"/>
<dbReference type="STRING" id="224326.BB_0303"/>
<dbReference type="PaxDb" id="224326-BB_0303"/>
<dbReference type="DNASU" id="1195140"/>
<dbReference type="EnsemblBacteria" id="AAC66645">
    <property type="protein sequence ID" value="AAC66645"/>
    <property type="gene ID" value="BB_0303"/>
</dbReference>
<dbReference type="GeneID" id="56567734"/>
<dbReference type="KEGG" id="bbu:BB_0303"/>
<dbReference type="PATRIC" id="fig|224326.49.peg.702"/>
<dbReference type="HOGENOM" id="CLU_023982_0_0_12"/>
<dbReference type="OrthoDB" id="9805475at2"/>
<dbReference type="UniPathway" id="UPA00219"/>
<dbReference type="Proteomes" id="UP000001807">
    <property type="component" value="Chromosome"/>
</dbReference>
<dbReference type="GO" id="GO:0005886">
    <property type="term" value="C:plasma membrane"/>
    <property type="evidence" value="ECO:0007669"/>
    <property type="project" value="UniProtKB-SubCell"/>
</dbReference>
<dbReference type="GO" id="GO:0046872">
    <property type="term" value="F:metal ion binding"/>
    <property type="evidence" value="ECO:0007669"/>
    <property type="project" value="UniProtKB-KW"/>
</dbReference>
<dbReference type="GO" id="GO:0008963">
    <property type="term" value="F:phospho-N-acetylmuramoyl-pentapeptide-transferase activity"/>
    <property type="evidence" value="ECO:0007669"/>
    <property type="project" value="UniProtKB-UniRule"/>
</dbReference>
<dbReference type="GO" id="GO:0051992">
    <property type="term" value="F:UDP-N-acetylmuramoyl-L-alanyl-D-glutamyl-meso-2,6-diaminopimelyl-D-alanyl-D-alanine:undecaprenyl-phosphate transferase activity"/>
    <property type="evidence" value="ECO:0007669"/>
    <property type="project" value="RHEA"/>
</dbReference>
<dbReference type="GO" id="GO:0051301">
    <property type="term" value="P:cell division"/>
    <property type="evidence" value="ECO:0007669"/>
    <property type="project" value="UniProtKB-KW"/>
</dbReference>
<dbReference type="GO" id="GO:0071555">
    <property type="term" value="P:cell wall organization"/>
    <property type="evidence" value="ECO:0007669"/>
    <property type="project" value="UniProtKB-KW"/>
</dbReference>
<dbReference type="GO" id="GO:0009252">
    <property type="term" value="P:peptidoglycan biosynthetic process"/>
    <property type="evidence" value="ECO:0007669"/>
    <property type="project" value="UniProtKB-UniRule"/>
</dbReference>
<dbReference type="GO" id="GO:0008360">
    <property type="term" value="P:regulation of cell shape"/>
    <property type="evidence" value="ECO:0007669"/>
    <property type="project" value="UniProtKB-KW"/>
</dbReference>
<dbReference type="CDD" id="cd06852">
    <property type="entry name" value="GT_MraY"/>
    <property type="match status" value="1"/>
</dbReference>
<dbReference type="HAMAP" id="MF_00038">
    <property type="entry name" value="MraY"/>
    <property type="match status" value="1"/>
</dbReference>
<dbReference type="InterPro" id="IPR000715">
    <property type="entry name" value="Glycosyl_transferase_4"/>
</dbReference>
<dbReference type="InterPro" id="IPR003524">
    <property type="entry name" value="PNAcMuramoyl-5peptid_Trfase"/>
</dbReference>
<dbReference type="InterPro" id="IPR018480">
    <property type="entry name" value="PNAcMuramoyl-5peptid_Trfase_CS"/>
</dbReference>
<dbReference type="NCBIfam" id="TIGR00445">
    <property type="entry name" value="mraY"/>
    <property type="match status" value="1"/>
</dbReference>
<dbReference type="PANTHER" id="PTHR22926">
    <property type="entry name" value="PHOSPHO-N-ACETYLMURAMOYL-PENTAPEPTIDE-TRANSFERASE"/>
    <property type="match status" value="1"/>
</dbReference>
<dbReference type="PANTHER" id="PTHR22926:SF5">
    <property type="entry name" value="PHOSPHO-N-ACETYLMURAMOYL-PENTAPEPTIDE-TRANSFERASE HOMOLOG"/>
    <property type="match status" value="1"/>
</dbReference>
<dbReference type="Pfam" id="PF00953">
    <property type="entry name" value="Glycos_transf_4"/>
    <property type="match status" value="1"/>
</dbReference>
<dbReference type="Pfam" id="PF10555">
    <property type="entry name" value="MraY_sig1"/>
    <property type="match status" value="1"/>
</dbReference>
<dbReference type="PROSITE" id="PS01347">
    <property type="entry name" value="MRAY_1"/>
    <property type="match status" value="1"/>
</dbReference>
<dbReference type="PROSITE" id="PS01348">
    <property type="entry name" value="MRAY_2"/>
    <property type="match status" value="1"/>
</dbReference>
<keyword id="KW-0131">Cell cycle</keyword>
<keyword id="KW-0132">Cell division</keyword>
<keyword id="KW-0997">Cell inner membrane</keyword>
<keyword id="KW-1003">Cell membrane</keyword>
<keyword id="KW-0133">Cell shape</keyword>
<keyword id="KW-0961">Cell wall biogenesis/degradation</keyword>
<keyword id="KW-0460">Magnesium</keyword>
<keyword id="KW-0472">Membrane</keyword>
<keyword id="KW-0479">Metal-binding</keyword>
<keyword id="KW-0573">Peptidoglycan synthesis</keyword>
<keyword id="KW-1185">Reference proteome</keyword>
<keyword id="KW-0808">Transferase</keyword>
<keyword id="KW-0812">Transmembrane</keyword>
<keyword id="KW-1133">Transmembrane helix</keyword>
<feature type="chain" id="PRO_0000108790" description="Phospho-N-acetylmuramoyl-pentapeptide-transferase">
    <location>
        <begin position="1"/>
        <end position="351"/>
    </location>
</feature>
<feature type="transmembrane region" description="Helical" evidence="1">
    <location>
        <begin position="17"/>
        <end position="37"/>
    </location>
</feature>
<feature type="transmembrane region" description="Helical" evidence="1">
    <location>
        <begin position="62"/>
        <end position="82"/>
    </location>
</feature>
<feature type="transmembrane region" description="Helical" evidence="1">
    <location>
        <begin position="85"/>
        <end position="105"/>
    </location>
</feature>
<feature type="transmembrane region" description="Helical" evidence="1">
    <location>
        <begin position="130"/>
        <end position="150"/>
    </location>
</feature>
<feature type="transmembrane region" description="Helical" evidence="1">
    <location>
        <begin position="158"/>
        <end position="178"/>
    </location>
</feature>
<feature type="transmembrane region" description="Helical" evidence="1">
    <location>
        <begin position="190"/>
        <end position="210"/>
    </location>
</feature>
<feature type="transmembrane region" description="Helical" evidence="1">
    <location>
        <begin position="230"/>
        <end position="250"/>
    </location>
</feature>
<feature type="transmembrane region" description="Helical" evidence="1">
    <location>
        <begin position="254"/>
        <end position="274"/>
    </location>
</feature>
<feature type="transmembrane region" description="Helical" evidence="1">
    <location>
        <begin position="279"/>
        <end position="299"/>
    </location>
</feature>
<feature type="transmembrane region" description="Helical" evidence="1">
    <location>
        <begin position="328"/>
        <end position="348"/>
    </location>
</feature>
<feature type="sequence conflict" description="In Ref. 3; CAA65460/CAA65292." evidence="2" ref="3">
    <original>L</original>
    <variation>C</variation>
    <location>
        <position position="91"/>
    </location>
</feature>
<organism>
    <name type="scientific">Borreliella burgdorferi (strain ATCC 35210 / DSM 4680 / CIP 102532 / B31)</name>
    <name type="common">Borrelia burgdorferi</name>
    <dbReference type="NCBI Taxonomy" id="224326"/>
    <lineage>
        <taxon>Bacteria</taxon>
        <taxon>Pseudomonadati</taxon>
        <taxon>Spirochaetota</taxon>
        <taxon>Spirochaetia</taxon>
        <taxon>Spirochaetales</taxon>
        <taxon>Borreliaceae</taxon>
        <taxon>Borreliella</taxon>
    </lineage>
</organism>